<feature type="chain" id="PRO_1000190596" description="Imidazole glycerol phosphate synthase subunit HisF">
    <location>
        <begin position="1"/>
        <end position="255"/>
    </location>
</feature>
<feature type="active site" evidence="1">
    <location>
        <position position="11"/>
    </location>
</feature>
<feature type="active site" evidence="1">
    <location>
        <position position="130"/>
    </location>
</feature>
<proteinExistence type="inferred from homology"/>
<reference key="1">
    <citation type="submission" date="2008-05" db="EMBL/GenBank/DDBJ databases">
        <title>Complete sequence of Rhodopseudomonas palustris TIE-1.</title>
        <authorList>
            <consortium name="US DOE Joint Genome Institute"/>
            <person name="Lucas S."/>
            <person name="Copeland A."/>
            <person name="Lapidus A."/>
            <person name="Glavina del Rio T."/>
            <person name="Dalin E."/>
            <person name="Tice H."/>
            <person name="Pitluck S."/>
            <person name="Chain P."/>
            <person name="Malfatti S."/>
            <person name="Shin M."/>
            <person name="Vergez L."/>
            <person name="Lang D."/>
            <person name="Schmutz J."/>
            <person name="Larimer F."/>
            <person name="Land M."/>
            <person name="Hauser L."/>
            <person name="Kyrpides N."/>
            <person name="Mikhailova N."/>
            <person name="Emerson D."/>
            <person name="Newman D.K."/>
            <person name="Roden E."/>
            <person name="Richardson P."/>
        </authorList>
    </citation>
    <scope>NUCLEOTIDE SEQUENCE [LARGE SCALE GENOMIC DNA]</scope>
    <source>
        <strain>TIE-1</strain>
    </source>
</reference>
<gene>
    <name evidence="1" type="primary">hisF</name>
    <name type="ordered locus">Rpal_0315</name>
</gene>
<name>HIS6_RHOPT</name>
<keyword id="KW-0028">Amino-acid biosynthesis</keyword>
<keyword id="KW-0963">Cytoplasm</keyword>
<keyword id="KW-0368">Histidine biosynthesis</keyword>
<keyword id="KW-0456">Lyase</keyword>
<protein>
    <recommendedName>
        <fullName evidence="1">Imidazole glycerol phosphate synthase subunit HisF</fullName>
        <ecNumber evidence="1">4.3.2.10</ecNumber>
    </recommendedName>
    <alternativeName>
        <fullName evidence="1">IGP synthase cyclase subunit</fullName>
    </alternativeName>
    <alternativeName>
        <fullName evidence="1">IGP synthase subunit HisF</fullName>
    </alternativeName>
    <alternativeName>
        <fullName evidence="1">ImGP synthase subunit HisF</fullName>
        <shortName evidence="1">IGPS subunit HisF</shortName>
    </alternativeName>
</protein>
<accession>B3Q951</accession>
<organism>
    <name type="scientific">Rhodopseudomonas palustris (strain TIE-1)</name>
    <dbReference type="NCBI Taxonomy" id="395960"/>
    <lineage>
        <taxon>Bacteria</taxon>
        <taxon>Pseudomonadati</taxon>
        <taxon>Pseudomonadota</taxon>
        <taxon>Alphaproteobacteria</taxon>
        <taxon>Hyphomicrobiales</taxon>
        <taxon>Nitrobacteraceae</taxon>
        <taxon>Rhodopseudomonas</taxon>
    </lineage>
</organism>
<dbReference type="EC" id="4.3.2.10" evidence="1"/>
<dbReference type="EMBL" id="CP001096">
    <property type="protein sequence ID" value="ACE98875.1"/>
    <property type="molecule type" value="Genomic_DNA"/>
</dbReference>
<dbReference type="RefSeq" id="WP_011155881.1">
    <property type="nucleotide sequence ID" value="NC_011004.1"/>
</dbReference>
<dbReference type="SMR" id="B3Q951"/>
<dbReference type="GeneID" id="66891323"/>
<dbReference type="KEGG" id="rpt:Rpal_0315"/>
<dbReference type="HOGENOM" id="CLU_048577_4_0_5"/>
<dbReference type="OrthoDB" id="9781903at2"/>
<dbReference type="UniPathway" id="UPA00031">
    <property type="reaction ID" value="UER00010"/>
</dbReference>
<dbReference type="Proteomes" id="UP000001725">
    <property type="component" value="Chromosome"/>
</dbReference>
<dbReference type="GO" id="GO:0005737">
    <property type="term" value="C:cytoplasm"/>
    <property type="evidence" value="ECO:0007669"/>
    <property type="project" value="UniProtKB-SubCell"/>
</dbReference>
<dbReference type="GO" id="GO:0000107">
    <property type="term" value="F:imidazoleglycerol-phosphate synthase activity"/>
    <property type="evidence" value="ECO:0007669"/>
    <property type="project" value="UniProtKB-UniRule"/>
</dbReference>
<dbReference type="GO" id="GO:0016829">
    <property type="term" value="F:lyase activity"/>
    <property type="evidence" value="ECO:0007669"/>
    <property type="project" value="UniProtKB-KW"/>
</dbReference>
<dbReference type="GO" id="GO:0000105">
    <property type="term" value="P:L-histidine biosynthetic process"/>
    <property type="evidence" value="ECO:0007669"/>
    <property type="project" value="UniProtKB-UniRule"/>
</dbReference>
<dbReference type="CDD" id="cd04731">
    <property type="entry name" value="HisF"/>
    <property type="match status" value="1"/>
</dbReference>
<dbReference type="FunFam" id="3.20.20.70:FF:000006">
    <property type="entry name" value="Imidazole glycerol phosphate synthase subunit HisF"/>
    <property type="match status" value="1"/>
</dbReference>
<dbReference type="Gene3D" id="3.20.20.70">
    <property type="entry name" value="Aldolase class I"/>
    <property type="match status" value="1"/>
</dbReference>
<dbReference type="HAMAP" id="MF_01013">
    <property type="entry name" value="HisF"/>
    <property type="match status" value="1"/>
</dbReference>
<dbReference type="InterPro" id="IPR013785">
    <property type="entry name" value="Aldolase_TIM"/>
</dbReference>
<dbReference type="InterPro" id="IPR006062">
    <property type="entry name" value="His_biosynth"/>
</dbReference>
<dbReference type="InterPro" id="IPR004651">
    <property type="entry name" value="HisF"/>
</dbReference>
<dbReference type="InterPro" id="IPR050064">
    <property type="entry name" value="IGPS_HisA/HisF"/>
</dbReference>
<dbReference type="InterPro" id="IPR011060">
    <property type="entry name" value="RibuloseP-bd_barrel"/>
</dbReference>
<dbReference type="NCBIfam" id="TIGR00735">
    <property type="entry name" value="hisF"/>
    <property type="match status" value="1"/>
</dbReference>
<dbReference type="PANTHER" id="PTHR21235:SF2">
    <property type="entry name" value="IMIDAZOLE GLYCEROL PHOSPHATE SYNTHASE HISHF"/>
    <property type="match status" value="1"/>
</dbReference>
<dbReference type="PANTHER" id="PTHR21235">
    <property type="entry name" value="IMIDAZOLE GLYCEROL PHOSPHATE SYNTHASE SUBUNIT HISF/H IGP SYNTHASE SUBUNIT HISF/H"/>
    <property type="match status" value="1"/>
</dbReference>
<dbReference type="Pfam" id="PF00977">
    <property type="entry name" value="His_biosynth"/>
    <property type="match status" value="1"/>
</dbReference>
<dbReference type="SUPFAM" id="SSF51366">
    <property type="entry name" value="Ribulose-phoshate binding barrel"/>
    <property type="match status" value="1"/>
</dbReference>
<sequence length="255" mass="27229">MFKVRVIPCLDVKDGRVVKGVNFVDLRDAGDPVEAAIAYDAAGADELCFLDITATHENRGIMLDVVRRTAEACFMPVTVGGGVRTVDDIKTLLRSGADKVSINSAAVARREFVKEAAEKFGDQCIVVAIDAKRVPGRDRWEIFTHGGRKGTGIDAIEFAQEVVSLGAGEILLTSMDRDGTKSGFDIPLTRAIADSVGVPVIASGGVGNLDHLVDGIREGHATAVLAASIFHFGEYTIRQAKDHMVQAGLPMRLDP</sequence>
<comment type="function">
    <text evidence="1">IGPS catalyzes the conversion of PRFAR and glutamine to IGP, AICAR and glutamate. The HisF subunit catalyzes the cyclization activity that produces IGP and AICAR from PRFAR using the ammonia provided by the HisH subunit.</text>
</comment>
<comment type="catalytic activity">
    <reaction evidence="1">
        <text>5-[(5-phospho-1-deoxy-D-ribulos-1-ylimino)methylamino]-1-(5-phospho-beta-D-ribosyl)imidazole-4-carboxamide + L-glutamine = D-erythro-1-(imidazol-4-yl)glycerol 3-phosphate + 5-amino-1-(5-phospho-beta-D-ribosyl)imidazole-4-carboxamide + L-glutamate + H(+)</text>
        <dbReference type="Rhea" id="RHEA:24793"/>
        <dbReference type="ChEBI" id="CHEBI:15378"/>
        <dbReference type="ChEBI" id="CHEBI:29985"/>
        <dbReference type="ChEBI" id="CHEBI:58278"/>
        <dbReference type="ChEBI" id="CHEBI:58359"/>
        <dbReference type="ChEBI" id="CHEBI:58475"/>
        <dbReference type="ChEBI" id="CHEBI:58525"/>
        <dbReference type="EC" id="4.3.2.10"/>
    </reaction>
</comment>
<comment type="pathway">
    <text evidence="1">Amino-acid biosynthesis; L-histidine biosynthesis; L-histidine from 5-phospho-alpha-D-ribose 1-diphosphate: step 5/9.</text>
</comment>
<comment type="subunit">
    <text evidence="1">Heterodimer of HisH and HisF.</text>
</comment>
<comment type="subcellular location">
    <subcellularLocation>
        <location evidence="1">Cytoplasm</location>
    </subcellularLocation>
</comment>
<comment type="similarity">
    <text evidence="1">Belongs to the HisA/HisF family.</text>
</comment>
<evidence type="ECO:0000255" key="1">
    <source>
        <dbReference type="HAMAP-Rule" id="MF_01013"/>
    </source>
</evidence>